<comment type="function">
    <text evidence="1">Component of the tagatose-1,6-bisphosphate aldolase KbaYZ that is required for full activity and stability of the Y subunit. Could have a chaperone-like function for the proper and stable folding of KbaY. When expressed alone, KbaZ does not show any aldolase activity.</text>
</comment>
<comment type="pathway">
    <text evidence="1">Carbohydrate metabolism; D-tagatose 6-phosphate degradation; D-glyceraldehyde 3-phosphate and glycerone phosphate from D-tagatose 6-phosphate: step 2/2.</text>
</comment>
<comment type="subunit">
    <text evidence="1">Forms a complex with KbaY.</text>
</comment>
<comment type="similarity">
    <text evidence="1">Belongs to the GatZ/KbaZ family. KbaZ subfamily.</text>
</comment>
<dbReference type="EMBL" id="FM180568">
    <property type="protein sequence ID" value="CAS10964.1"/>
    <property type="molecule type" value="Genomic_DNA"/>
</dbReference>
<dbReference type="RefSeq" id="WP_000681926.1">
    <property type="nucleotide sequence ID" value="NC_011601.1"/>
</dbReference>
<dbReference type="SMR" id="B7UJ30"/>
<dbReference type="KEGG" id="ecg:E2348C_3416"/>
<dbReference type="HOGENOM" id="CLU_053334_0_0_6"/>
<dbReference type="UniPathway" id="UPA00704">
    <property type="reaction ID" value="UER00716"/>
</dbReference>
<dbReference type="Proteomes" id="UP000008205">
    <property type="component" value="Chromosome"/>
</dbReference>
<dbReference type="GO" id="GO:0005886">
    <property type="term" value="C:plasma membrane"/>
    <property type="evidence" value="ECO:0007669"/>
    <property type="project" value="TreeGrafter"/>
</dbReference>
<dbReference type="GO" id="GO:0005975">
    <property type="term" value="P:carbohydrate metabolic process"/>
    <property type="evidence" value="ECO:0007669"/>
    <property type="project" value="InterPro"/>
</dbReference>
<dbReference type="GO" id="GO:2001059">
    <property type="term" value="P:D-tagatose 6-phosphate catabolic process"/>
    <property type="evidence" value="ECO:0007669"/>
    <property type="project" value="UniProtKB-UniRule"/>
</dbReference>
<dbReference type="GO" id="GO:0009401">
    <property type="term" value="P:phosphoenolpyruvate-dependent sugar phosphotransferase system"/>
    <property type="evidence" value="ECO:0007669"/>
    <property type="project" value="TreeGrafter"/>
</dbReference>
<dbReference type="Gene3D" id="3.20.20.70">
    <property type="entry name" value="Aldolase class I"/>
    <property type="match status" value="1"/>
</dbReference>
<dbReference type="Gene3D" id="1.10.400.20">
    <property type="entry name" value="putative tagatose 6-phosphate kinase domain like"/>
    <property type="match status" value="1"/>
</dbReference>
<dbReference type="HAMAP" id="MF_01295">
    <property type="entry name" value="Tagatose_aldol_KbaZ"/>
    <property type="match status" value="1"/>
</dbReference>
<dbReference type="InterPro" id="IPR013785">
    <property type="entry name" value="Aldolase_TIM"/>
</dbReference>
<dbReference type="InterPro" id="IPR012062">
    <property type="entry name" value="GatZ/KbaZ-like"/>
</dbReference>
<dbReference type="InterPro" id="IPR050303">
    <property type="entry name" value="GatZ_KbaZ_carbometab"/>
</dbReference>
<dbReference type="InterPro" id="IPR023435">
    <property type="entry name" value="TagBP_ald_KbaZ"/>
</dbReference>
<dbReference type="NCBIfam" id="TIGR02810">
    <property type="entry name" value="agaZ_gatZ"/>
    <property type="match status" value="1"/>
</dbReference>
<dbReference type="NCBIfam" id="NF012002">
    <property type="entry name" value="PRK15458.1"/>
    <property type="match status" value="1"/>
</dbReference>
<dbReference type="PANTHER" id="PTHR32502:SF2">
    <property type="entry name" value="D-TAGATOSE-1,6-BISPHOSPHATE ALDOLASE SUBUNIT KBAZ"/>
    <property type="match status" value="1"/>
</dbReference>
<dbReference type="PANTHER" id="PTHR32502">
    <property type="entry name" value="N-ACETYLGALACTOSAMINE PERMEASE II COMPONENT-RELATED"/>
    <property type="match status" value="1"/>
</dbReference>
<dbReference type="Pfam" id="PF08013">
    <property type="entry name" value="GatZ_KbaZ-like"/>
    <property type="match status" value="1"/>
</dbReference>
<dbReference type="PIRSF" id="PIRSF009264">
    <property type="entry name" value="TagBP_ald_AgaZ"/>
    <property type="match status" value="1"/>
</dbReference>
<dbReference type="SUPFAM" id="SSF51569">
    <property type="entry name" value="Aldolase"/>
    <property type="match status" value="1"/>
</dbReference>
<protein>
    <recommendedName>
        <fullName evidence="1">D-tagatose-1,6-bisphosphate aldolase subunit KbaZ</fullName>
    </recommendedName>
</protein>
<proteinExistence type="inferred from homology"/>
<sequence>MKHLTEMVRQHKAGKTNGIYAVCSAHPLVLEAAIRYASANQTPLLIEATSNQVDQFGGYTGMTPADFRGFVCQLADSLNFPQDALILGGDHLGPNRWQNLPAAQAMANADDLIKSYVAAGFKKIHLDCSMSCQDDPIPLTDDIVAERAARLAKVAEETCLEHFGEADLEYVIGTEVPVPGGAHETLSELAVTTPDAARATLEAHRHAFEKQGLNAIWPRIIALVVQPGVEFDHTNVIDYQPAKATALSQMVENYETLIFEAHSTDYQTPQSLRQLVIDHFAILKVGPALTFALREALFSLAAIEEELVPAKACSGLRQVLENVMLDRPEYWQSHYHGDGNARRLARGYSYSDRVRYYWPDSQIDDAFAHLVRNLADSPIPLPLISQYLPLQYVKVRSGELQPTPRELIINHIQDILAQYHTACEGQ</sequence>
<name>KBAZ_ECO27</name>
<evidence type="ECO:0000255" key="1">
    <source>
        <dbReference type="HAMAP-Rule" id="MF_01295"/>
    </source>
</evidence>
<reference key="1">
    <citation type="journal article" date="2009" name="J. Bacteriol.">
        <title>Complete genome sequence and comparative genome analysis of enteropathogenic Escherichia coli O127:H6 strain E2348/69.</title>
        <authorList>
            <person name="Iguchi A."/>
            <person name="Thomson N.R."/>
            <person name="Ogura Y."/>
            <person name="Saunders D."/>
            <person name="Ooka T."/>
            <person name="Henderson I.R."/>
            <person name="Harris D."/>
            <person name="Asadulghani M."/>
            <person name="Kurokawa K."/>
            <person name="Dean P."/>
            <person name="Kenny B."/>
            <person name="Quail M.A."/>
            <person name="Thurston S."/>
            <person name="Dougan G."/>
            <person name="Hayashi T."/>
            <person name="Parkhill J."/>
            <person name="Frankel G."/>
        </authorList>
    </citation>
    <scope>NUCLEOTIDE SEQUENCE [LARGE SCALE GENOMIC DNA]</scope>
    <source>
        <strain>E2348/69 / EPEC</strain>
    </source>
</reference>
<feature type="chain" id="PRO_0000372530" description="D-tagatose-1,6-bisphosphate aldolase subunit KbaZ">
    <location>
        <begin position="1"/>
        <end position="426"/>
    </location>
</feature>
<accession>B7UJ30</accession>
<gene>
    <name evidence="1" type="primary">kbaZ</name>
    <name type="ordered locus">E2348C_3416</name>
</gene>
<keyword id="KW-1185">Reference proteome</keyword>
<organism>
    <name type="scientific">Escherichia coli O127:H6 (strain E2348/69 / EPEC)</name>
    <dbReference type="NCBI Taxonomy" id="574521"/>
    <lineage>
        <taxon>Bacteria</taxon>
        <taxon>Pseudomonadati</taxon>
        <taxon>Pseudomonadota</taxon>
        <taxon>Gammaproteobacteria</taxon>
        <taxon>Enterobacterales</taxon>
        <taxon>Enterobacteriaceae</taxon>
        <taxon>Escherichia</taxon>
    </lineage>
</organism>